<gene>
    <name evidence="1" type="primary">rplU</name>
    <name type="ordered locus">SPs1302</name>
</gene>
<accession>P0DE21</accession>
<accession>Q79WT5</accession>
<accession>Q7CF92</accession>
<proteinExistence type="inferred from homology"/>
<comment type="function">
    <text evidence="1">This protein binds to 23S rRNA in the presence of protein L20.</text>
</comment>
<comment type="subunit">
    <text evidence="1">Part of the 50S ribosomal subunit. Contacts protein L20.</text>
</comment>
<comment type="similarity">
    <text evidence="1">Belongs to the bacterial ribosomal protein bL21 family.</text>
</comment>
<dbReference type="EMBL" id="BA000034">
    <property type="protein sequence ID" value="BAC64397.1"/>
    <property type="molecule type" value="Genomic_DNA"/>
</dbReference>
<dbReference type="RefSeq" id="WP_002985116.1">
    <property type="nucleotide sequence ID" value="NC_004606.1"/>
</dbReference>
<dbReference type="SMR" id="P0DE21"/>
<dbReference type="GeneID" id="83690429"/>
<dbReference type="KEGG" id="sps:SPs1302"/>
<dbReference type="HOGENOM" id="CLU_061463_3_1_9"/>
<dbReference type="GO" id="GO:0005737">
    <property type="term" value="C:cytoplasm"/>
    <property type="evidence" value="ECO:0007669"/>
    <property type="project" value="UniProtKB-ARBA"/>
</dbReference>
<dbReference type="GO" id="GO:1990904">
    <property type="term" value="C:ribonucleoprotein complex"/>
    <property type="evidence" value="ECO:0007669"/>
    <property type="project" value="UniProtKB-KW"/>
</dbReference>
<dbReference type="GO" id="GO:0005840">
    <property type="term" value="C:ribosome"/>
    <property type="evidence" value="ECO:0007669"/>
    <property type="project" value="UniProtKB-KW"/>
</dbReference>
<dbReference type="GO" id="GO:0019843">
    <property type="term" value="F:rRNA binding"/>
    <property type="evidence" value="ECO:0007669"/>
    <property type="project" value="UniProtKB-UniRule"/>
</dbReference>
<dbReference type="GO" id="GO:0003735">
    <property type="term" value="F:structural constituent of ribosome"/>
    <property type="evidence" value="ECO:0007669"/>
    <property type="project" value="InterPro"/>
</dbReference>
<dbReference type="GO" id="GO:0006412">
    <property type="term" value="P:translation"/>
    <property type="evidence" value="ECO:0007669"/>
    <property type="project" value="UniProtKB-UniRule"/>
</dbReference>
<dbReference type="HAMAP" id="MF_01363">
    <property type="entry name" value="Ribosomal_bL21"/>
    <property type="match status" value="1"/>
</dbReference>
<dbReference type="InterPro" id="IPR028909">
    <property type="entry name" value="bL21-like"/>
</dbReference>
<dbReference type="InterPro" id="IPR036164">
    <property type="entry name" value="bL21-like_sf"/>
</dbReference>
<dbReference type="InterPro" id="IPR001787">
    <property type="entry name" value="Ribosomal_bL21"/>
</dbReference>
<dbReference type="InterPro" id="IPR018258">
    <property type="entry name" value="Ribosomal_bL21_CS"/>
</dbReference>
<dbReference type="NCBIfam" id="TIGR00061">
    <property type="entry name" value="L21"/>
    <property type="match status" value="1"/>
</dbReference>
<dbReference type="PANTHER" id="PTHR21349">
    <property type="entry name" value="50S RIBOSOMAL PROTEIN L21"/>
    <property type="match status" value="1"/>
</dbReference>
<dbReference type="PANTHER" id="PTHR21349:SF0">
    <property type="entry name" value="LARGE RIBOSOMAL SUBUNIT PROTEIN BL21M"/>
    <property type="match status" value="1"/>
</dbReference>
<dbReference type="Pfam" id="PF00829">
    <property type="entry name" value="Ribosomal_L21p"/>
    <property type="match status" value="1"/>
</dbReference>
<dbReference type="SUPFAM" id="SSF141091">
    <property type="entry name" value="L21p-like"/>
    <property type="match status" value="1"/>
</dbReference>
<dbReference type="PROSITE" id="PS01169">
    <property type="entry name" value="RIBOSOMAL_L21"/>
    <property type="match status" value="1"/>
</dbReference>
<evidence type="ECO:0000255" key="1">
    <source>
        <dbReference type="HAMAP-Rule" id="MF_01363"/>
    </source>
</evidence>
<evidence type="ECO:0000305" key="2"/>
<name>RL21_STRPQ</name>
<keyword id="KW-0687">Ribonucleoprotein</keyword>
<keyword id="KW-0689">Ribosomal protein</keyword>
<keyword id="KW-0694">RNA-binding</keyword>
<keyword id="KW-0699">rRNA-binding</keyword>
<reference key="1">
    <citation type="journal article" date="2003" name="Genome Res.">
        <title>Genome sequence of an M3 strain of Streptococcus pyogenes reveals a large-scale genomic rearrangement in invasive strains and new insights into phage evolution.</title>
        <authorList>
            <person name="Nakagawa I."/>
            <person name="Kurokawa K."/>
            <person name="Yamashita A."/>
            <person name="Nakata M."/>
            <person name="Tomiyasu Y."/>
            <person name="Okahashi N."/>
            <person name="Kawabata S."/>
            <person name="Yamazaki K."/>
            <person name="Shiba T."/>
            <person name="Yasunaga T."/>
            <person name="Hayashi H."/>
            <person name="Hattori M."/>
            <person name="Hamada S."/>
        </authorList>
    </citation>
    <scope>NUCLEOTIDE SEQUENCE [LARGE SCALE GENOMIC DNA]</scope>
    <source>
        <strain>SSI-1</strain>
    </source>
</reference>
<feature type="chain" id="PRO_0000411500" description="Large ribosomal subunit protein bL21">
    <location>
        <begin position="1"/>
        <end position="104"/>
    </location>
</feature>
<organism>
    <name type="scientific">Streptococcus pyogenes serotype M3 (strain SSI-1)</name>
    <dbReference type="NCBI Taxonomy" id="193567"/>
    <lineage>
        <taxon>Bacteria</taxon>
        <taxon>Bacillati</taxon>
        <taxon>Bacillota</taxon>
        <taxon>Bacilli</taxon>
        <taxon>Lactobacillales</taxon>
        <taxon>Streptococcaceae</taxon>
        <taxon>Streptococcus</taxon>
    </lineage>
</organism>
<sequence length="104" mass="11155">MSTYAIIKTGGKQVKVEVGQAIYVEKIDAEAGAEVTFNEVVLVGGDKTVVGTPVVEGATVVGTVEKQGKQKKVVTFKYKPKKGSHRKQGHRQPYTKVVINAINA</sequence>
<protein>
    <recommendedName>
        <fullName evidence="1">Large ribosomal subunit protein bL21</fullName>
    </recommendedName>
    <alternativeName>
        <fullName evidence="2">50S ribosomal protein L21</fullName>
    </alternativeName>
</protein>